<organismHost>
    <name type="scientific">Amazona oratrix</name>
    <name type="common">yellow-headed parrot</name>
    <dbReference type="NCBI Taxonomy" id="152276"/>
</organismHost>
<protein>
    <recommendedName>
        <fullName>Packaging protein UL32</fullName>
    </recommendedName>
</protein>
<keyword id="KW-1035">Host cytoplasm</keyword>
<keyword id="KW-1048">Host nucleus</keyword>
<keyword id="KW-0479">Metal-binding</keyword>
<keyword id="KW-1185">Reference proteome</keyword>
<keyword id="KW-0862">Zinc</keyword>
<keyword id="KW-0863">Zinc-finger</keyword>
<sequence>MWCARSNAEVRVELTKGWKSGALLKPYTGYDASLLALNDELSDELLYAAHLIQIPDLEQQPSDCGEDEDGAGDGHDETDSFAEMIANIYTLDRACGVCQVLSEYRKKFPLKVEWMADYALLCHKTQAAPLCATTTFVTAFEFAFIMDKHYLPAHGASMVGEFGRRNLFLADVQKHFFLNGCFTPVEGGLVSKIDLNNYSFLVQSVARYAVTSFEGAKSSSWQPNCGAAGQQARHAPAGHGKQMAWAGGATVATRGPGDSTWNSPKTSSTAVALLKWREYARPLECFGKRRHRGLKRSAADADSAGAISMTCVQVAEAEDFARERELVDRAEYPAAQCAAGAAMQCPSKWRFADLTALLMAGTASLPARVAESSGATECPIHEIAAARQATVREYHDRVAEVIMSEQNDRGREPPRFWGRAAKPAAALGPILASVLPHPNGRGGTGGECLLCNLMLTEDYWRAIRLLKSKVVGREDTNTSLFDGVQPSVDQFEEYANTADGGRMLTLLKSVGPNAIYKHLFCDPLCAINALRISPDVLWGSPPSDPEAAELYKAELAARPNFSERVCRGVWILAFAFKAYQLAPPRPTALSTFIRSAESYLKRHGLNCIALEHALTRYV</sequence>
<reference key="1">
    <citation type="journal article" date="2006" name="J. Virol.">
        <title>Psittacid herpesvirus 1 and infectious laryngotracheitis virus: Comparative genome sequence analysis of two avian alphaherpesviruses.</title>
        <authorList>
            <person name="Thureen D.R."/>
            <person name="Keeler C.L. Jr."/>
        </authorList>
    </citation>
    <scope>NUCLEOTIDE SEQUENCE [LARGE SCALE GENOMIC DNA]</scope>
</reference>
<name>UL32_PSHV1</name>
<evidence type="ECO:0000250" key="1"/>
<evidence type="ECO:0000255" key="2">
    <source>
        <dbReference type="PROSITE-ProRule" id="PRU01332"/>
    </source>
</evidence>
<evidence type="ECO:0000305" key="3"/>
<dbReference type="EMBL" id="AY372243">
    <property type="protein sequence ID" value="AAQ73711.1"/>
    <property type="molecule type" value="Genomic_DNA"/>
</dbReference>
<dbReference type="RefSeq" id="NP_944405.1">
    <property type="nucleotide sequence ID" value="NC_005264.1"/>
</dbReference>
<dbReference type="SMR" id="Q6UDJ9"/>
<dbReference type="GeneID" id="2656960"/>
<dbReference type="KEGG" id="vg:2656960"/>
<dbReference type="Proteomes" id="UP000006840">
    <property type="component" value="Segment"/>
</dbReference>
<dbReference type="GO" id="GO:0030430">
    <property type="term" value="C:host cell cytoplasm"/>
    <property type="evidence" value="ECO:0007669"/>
    <property type="project" value="UniProtKB-SubCell"/>
</dbReference>
<dbReference type="GO" id="GO:0042025">
    <property type="term" value="C:host cell nucleus"/>
    <property type="evidence" value="ECO:0007669"/>
    <property type="project" value="UniProtKB-SubCell"/>
</dbReference>
<dbReference type="GO" id="GO:0019031">
    <property type="term" value="C:viral envelope"/>
    <property type="evidence" value="ECO:0007669"/>
    <property type="project" value="InterPro"/>
</dbReference>
<dbReference type="GO" id="GO:0008270">
    <property type="term" value="F:zinc ion binding"/>
    <property type="evidence" value="ECO:0007669"/>
    <property type="project" value="UniProtKB-KW"/>
</dbReference>
<dbReference type="InterPro" id="IPR002597">
    <property type="entry name" value="Herpes_env"/>
</dbReference>
<dbReference type="Pfam" id="PF01673">
    <property type="entry name" value="Herpes_env"/>
    <property type="match status" value="1"/>
</dbReference>
<dbReference type="PROSITE" id="PS51988">
    <property type="entry name" value="HERPESVIRUS_UL32"/>
    <property type="match status" value="1"/>
</dbReference>
<accession>Q6UDJ9</accession>
<comment type="function">
    <text evidence="1">Plays a role in efficient localization of neo-synthesized capsids to nuclear replication compartments, thereby controlling cleavage and packaging of virus genomic DNA.</text>
</comment>
<comment type="subcellular location">
    <subcellularLocation>
        <location>Host cytoplasm</location>
    </subcellularLocation>
    <subcellularLocation>
        <location>Host nucleus</location>
    </subcellularLocation>
    <text evidence="1">Mainly cytoplasmic in transfected cell culture.</text>
</comment>
<comment type="similarity">
    <text evidence="3">Belongs to the herpesviridae UL32 protein family.</text>
</comment>
<feature type="chain" id="PRO_0000406850" description="Packaging protein UL32">
    <location>
        <begin position="1"/>
        <end position="618"/>
    </location>
</feature>
<feature type="region of interest" description="Zinc finger 1" evidence="2">
    <location>
        <begin position="95"/>
        <end position="181"/>
    </location>
</feature>
<feature type="region of interest" description="Zinc finger 2" evidence="2">
    <location>
        <begin position="448"/>
        <end position="525"/>
    </location>
</feature>
<feature type="binding site" evidence="2">
    <location>
        <position position="95"/>
    </location>
    <ligand>
        <name>Zn(2+)</name>
        <dbReference type="ChEBI" id="CHEBI:29105"/>
        <label>1</label>
    </ligand>
</feature>
<feature type="binding site" evidence="2">
    <location>
        <position position="98"/>
    </location>
    <ligand>
        <name>Zn(2+)</name>
        <dbReference type="ChEBI" id="CHEBI:29105"/>
        <label>1</label>
    </ligand>
</feature>
<feature type="binding site" evidence="2">
    <location>
        <position position="175"/>
    </location>
    <ligand>
        <name>Zn(2+)</name>
        <dbReference type="ChEBI" id="CHEBI:29105"/>
        <label>1</label>
    </ligand>
</feature>
<feature type="binding site" evidence="2">
    <location>
        <position position="181"/>
    </location>
    <ligand>
        <name>Zn(2+)</name>
        <dbReference type="ChEBI" id="CHEBI:29105"/>
        <label>1</label>
    </ligand>
</feature>
<feature type="binding site" evidence="2">
    <location>
        <position position="448"/>
    </location>
    <ligand>
        <name>Zn(2+)</name>
        <dbReference type="ChEBI" id="CHEBI:29105"/>
        <label>2</label>
    </ligand>
</feature>
<feature type="binding site" evidence="2">
    <location>
        <position position="451"/>
    </location>
    <ligand>
        <name>Zn(2+)</name>
        <dbReference type="ChEBI" id="CHEBI:29105"/>
        <label>2</label>
    </ligand>
</feature>
<feature type="binding site" evidence="2">
    <location>
        <position position="518"/>
    </location>
    <ligand>
        <name>Zn(2+)</name>
        <dbReference type="ChEBI" id="CHEBI:29105"/>
        <label>2</label>
    </ligand>
</feature>
<feature type="binding site" evidence="2">
    <location>
        <position position="525"/>
    </location>
    <ligand>
        <name>Zn(2+)</name>
        <dbReference type="ChEBI" id="CHEBI:29105"/>
        <label>2</label>
    </ligand>
</feature>
<gene>
    <name type="primary">UL32</name>
</gene>
<proteinExistence type="inferred from homology"/>
<organism>
    <name type="scientific">Psittacid herpesvirus 1 (isolate Amazon parrot/-/97-0001/1997)</name>
    <name type="common">PsHV-1</name>
    <name type="synonym">Pacheco's disease virus</name>
    <dbReference type="NCBI Taxonomy" id="670426"/>
    <lineage>
        <taxon>Viruses</taxon>
        <taxon>Duplodnaviria</taxon>
        <taxon>Heunggongvirae</taxon>
        <taxon>Peploviricota</taxon>
        <taxon>Herviviricetes</taxon>
        <taxon>Herpesvirales</taxon>
        <taxon>Orthoherpesviridae</taxon>
        <taxon>Alphaherpesvirinae</taxon>
        <taxon>Iltovirus</taxon>
        <taxon>Iltovirus psittacidalpha1</taxon>
        <taxon>Psittacid alphaherpesvirus 1</taxon>
    </lineage>
</organism>